<protein>
    <recommendedName>
        <fullName evidence="1">Phosphoenolpyruvate carboxykinase (ATP)</fullName>
        <shortName evidence="1">PCK</shortName>
        <shortName evidence="1">PEP carboxykinase</shortName>
        <shortName evidence="1">PEPCK</shortName>
        <ecNumber evidence="1">4.1.1.49</ecNumber>
    </recommendedName>
</protein>
<organism>
    <name type="scientific">Escherichia coli O127:H6 (strain E2348/69 / EPEC)</name>
    <dbReference type="NCBI Taxonomy" id="574521"/>
    <lineage>
        <taxon>Bacteria</taxon>
        <taxon>Pseudomonadati</taxon>
        <taxon>Pseudomonadota</taxon>
        <taxon>Gammaproteobacteria</taxon>
        <taxon>Enterobacterales</taxon>
        <taxon>Enterobacteriaceae</taxon>
        <taxon>Escherichia</taxon>
    </lineage>
</organism>
<sequence length="540" mass="59643">MRVNNGLTPQELEAYGISDVHDIVYNPSYDLLYQEELDPSLTGYERGVLTNLGAVAVDTGIFTGRSPKDKYIVRDDTTRDTFWWADKGKGKNDNKPLSPETWQHLKGLVTRQLSGKRLFVVDAFCGANPDTRLSVRFITEVAWQAHFVKNMFIRPSDEELAGFKPDFIVMNGAKCTNPQWKEQGLNSENFVAFNLTERMQLIGGTWYGGEMKKGMFSMMNYLLPLKGIASMHCSANVGEKGDVAVFFGLSGTGKTTLSTDPKRRLIGDDEHGWDDDGVFNFEGGCYAKTIKLSKEAEPEIYNAIRRDALLENVTVREDGTIDFDDGSKTENTRVSYPIYHIDNIVKPVSKAGHATKVIFLTADAFGVLPPVSRLTADQTQYHFLSGFTAKLAGTERGITEPTPTFSACFGAAFLSLHPTQYAEVLVKRMQAAGAQAYLVNTGWNGTGKRISIKDTRAIIDAILNGSLDNAETFTLPMFNLAIPTELPGVDTKILDPRNTYASPEQWQEKAETLAKLFIDNFDKYTDTPAGAALVAAGPKL</sequence>
<gene>
    <name evidence="1" type="primary">pckA</name>
    <name type="ordered locus">E2348C_3647</name>
</gene>
<keyword id="KW-0007">Acetylation</keyword>
<keyword id="KW-0067">ATP-binding</keyword>
<keyword id="KW-0963">Cytoplasm</keyword>
<keyword id="KW-0210">Decarboxylase</keyword>
<keyword id="KW-0312">Gluconeogenesis</keyword>
<keyword id="KW-0456">Lyase</keyword>
<keyword id="KW-0464">Manganese</keyword>
<keyword id="KW-0479">Metal-binding</keyword>
<keyword id="KW-0547">Nucleotide-binding</keyword>
<keyword id="KW-1185">Reference proteome</keyword>
<comment type="function">
    <text evidence="1">Involved in the gluconeogenesis. Catalyzes the conversion of oxaloacetate (OAA) to phosphoenolpyruvate (PEP) through direct phosphoryl transfer between the nucleoside triphosphate and OAA.</text>
</comment>
<comment type="catalytic activity">
    <reaction evidence="1">
        <text>oxaloacetate + ATP = phosphoenolpyruvate + ADP + CO2</text>
        <dbReference type="Rhea" id="RHEA:18617"/>
        <dbReference type="ChEBI" id="CHEBI:16452"/>
        <dbReference type="ChEBI" id="CHEBI:16526"/>
        <dbReference type="ChEBI" id="CHEBI:30616"/>
        <dbReference type="ChEBI" id="CHEBI:58702"/>
        <dbReference type="ChEBI" id="CHEBI:456216"/>
        <dbReference type="EC" id="4.1.1.49"/>
    </reaction>
</comment>
<comment type="cofactor">
    <cofactor evidence="1">
        <name>Mn(2+)</name>
        <dbReference type="ChEBI" id="CHEBI:29035"/>
    </cofactor>
    <text evidence="1">Binds 1 Mn(2+) ion per subunit.</text>
</comment>
<comment type="pathway">
    <text evidence="1">Carbohydrate biosynthesis; gluconeogenesis.</text>
</comment>
<comment type="subunit">
    <text evidence="1">Monomer.</text>
</comment>
<comment type="subcellular location">
    <subcellularLocation>
        <location evidence="1">Cytoplasm</location>
    </subcellularLocation>
</comment>
<comment type="similarity">
    <text evidence="1">Belongs to the phosphoenolpyruvate carboxykinase (ATP) family.</text>
</comment>
<name>PCKA_ECO27</name>
<dbReference type="EC" id="4.1.1.49" evidence="1"/>
<dbReference type="EMBL" id="FM180568">
    <property type="protein sequence ID" value="CAS11195.1"/>
    <property type="molecule type" value="Genomic_DNA"/>
</dbReference>
<dbReference type="RefSeq" id="WP_001265681.1">
    <property type="nucleotide sequence ID" value="NC_011601.1"/>
</dbReference>
<dbReference type="SMR" id="B7UKA7"/>
<dbReference type="KEGG" id="ecg:E2348C_3647"/>
<dbReference type="HOGENOM" id="CLU_018247_0_1_6"/>
<dbReference type="UniPathway" id="UPA00138"/>
<dbReference type="Proteomes" id="UP000008205">
    <property type="component" value="Chromosome"/>
</dbReference>
<dbReference type="GO" id="GO:0005829">
    <property type="term" value="C:cytosol"/>
    <property type="evidence" value="ECO:0007669"/>
    <property type="project" value="TreeGrafter"/>
</dbReference>
<dbReference type="GO" id="GO:0005524">
    <property type="term" value="F:ATP binding"/>
    <property type="evidence" value="ECO:0007669"/>
    <property type="project" value="UniProtKB-UniRule"/>
</dbReference>
<dbReference type="GO" id="GO:0046872">
    <property type="term" value="F:metal ion binding"/>
    <property type="evidence" value="ECO:0007669"/>
    <property type="project" value="UniProtKB-KW"/>
</dbReference>
<dbReference type="GO" id="GO:0004612">
    <property type="term" value="F:phosphoenolpyruvate carboxykinase (ATP) activity"/>
    <property type="evidence" value="ECO:0007669"/>
    <property type="project" value="UniProtKB-UniRule"/>
</dbReference>
<dbReference type="GO" id="GO:0006094">
    <property type="term" value="P:gluconeogenesis"/>
    <property type="evidence" value="ECO:0007669"/>
    <property type="project" value="UniProtKB-UniRule"/>
</dbReference>
<dbReference type="CDD" id="cd00484">
    <property type="entry name" value="PEPCK_ATP"/>
    <property type="match status" value="1"/>
</dbReference>
<dbReference type="FunFam" id="2.170.8.10:FF:000001">
    <property type="entry name" value="Phosphoenolpyruvate carboxykinase (ATP)"/>
    <property type="match status" value="1"/>
</dbReference>
<dbReference type="FunFam" id="3.40.449.10:FF:000001">
    <property type="entry name" value="Phosphoenolpyruvate carboxykinase (ATP)"/>
    <property type="match status" value="1"/>
</dbReference>
<dbReference type="Gene3D" id="3.90.228.20">
    <property type="match status" value="1"/>
</dbReference>
<dbReference type="Gene3D" id="3.40.449.10">
    <property type="entry name" value="Phosphoenolpyruvate Carboxykinase, domain 1"/>
    <property type="match status" value="1"/>
</dbReference>
<dbReference type="Gene3D" id="2.170.8.10">
    <property type="entry name" value="Phosphoenolpyruvate Carboxykinase, domain 2"/>
    <property type="match status" value="1"/>
</dbReference>
<dbReference type="HAMAP" id="MF_00453">
    <property type="entry name" value="PEPCK_ATP"/>
    <property type="match status" value="1"/>
</dbReference>
<dbReference type="InterPro" id="IPR001272">
    <property type="entry name" value="PEP_carboxykinase_ATP"/>
</dbReference>
<dbReference type="InterPro" id="IPR013035">
    <property type="entry name" value="PEP_carboxykinase_C"/>
</dbReference>
<dbReference type="InterPro" id="IPR008210">
    <property type="entry name" value="PEP_carboxykinase_N"/>
</dbReference>
<dbReference type="InterPro" id="IPR015994">
    <property type="entry name" value="PEPCK_ATP_CS"/>
</dbReference>
<dbReference type="NCBIfam" id="TIGR00224">
    <property type="entry name" value="pckA"/>
    <property type="match status" value="1"/>
</dbReference>
<dbReference type="NCBIfam" id="NF006819">
    <property type="entry name" value="PRK09344.1-1"/>
    <property type="match status" value="1"/>
</dbReference>
<dbReference type="NCBIfam" id="NF006820">
    <property type="entry name" value="PRK09344.1-2"/>
    <property type="match status" value="1"/>
</dbReference>
<dbReference type="NCBIfam" id="NF006821">
    <property type="entry name" value="PRK09344.1-3"/>
    <property type="match status" value="1"/>
</dbReference>
<dbReference type="PANTHER" id="PTHR30031:SF0">
    <property type="entry name" value="PHOSPHOENOLPYRUVATE CARBOXYKINASE (ATP)"/>
    <property type="match status" value="1"/>
</dbReference>
<dbReference type="PANTHER" id="PTHR30031">
    <property type="entry name" value="PHOSPHOENOLPYRUVATE CARBOXYKINASE ATP"/>
    <property type="match status" value="1"/>
</dbReference>
<dbReference type="Pfam" id="PF01293">
    <property type="entry name" value="PEPCK_ATP"/>
    <property type="match status" value="1"/>
</dbReference>
<dbReference type="PIRSF" id="PIRSF006294">
    <property type="entry name" value="PEP_crbxkin"/>
    <property type="match status" value="1"/>
</dbReference>
<dbReference type="SUPFAM" id="SSF68923">
    <property type="entry name" value="PEP carboxykinase N-terminal domain"/>
    <property type="match status" value="1"/>
</dbReference>
<dbReference type="SUPFAM" id="SSF53795">
    <property type="entry name" value="PEP carboxykinase-like"/>
    <property type="match status" value="1"/>
</dbReference>
<dbReference type="PROSITE" id="PS00532">
    <property type="entry name" value="PEPCK_ATP"/>
    <property type="match status" value="1"/>
</dbReference>
<feature type="chain" id="PRO_1000192314" description="Phosphoenolpyruvate carboxykinase (ATP)">
    <location>
        <begin position="1"/>
        <end position="540"/>
    </location>
</feature>
<feature type="binding site" evidence="1">
    <location>
        <position position="65"/>
    </location>
    <ligand>
        <name>substrate</name>
    </ligand>
</feature>
<feature type="binding site" evidence="1">
    <location>
        <position position="207"/>
    </location>
    <ligand>
        <name>substrate</name>
    </ligand>
</feature>
<feature type="binding site" evidence="1">
    <location>
        <position position="213"/>
    </location>
    <ligand>
        <name>ATP</name>
        <dbReference type="ChEBI" id="CHEBI:30616"/>
    </ligand>
</feature>
<feature type="binding site" evidence="1">
    <location>
        <position position="213"/>
    </location>
    <ligand>
        <name>Mn(2+)</name>
        <dbReference type="ChEBI" id="CHEBI:29035"/>
    </ligand>
</feature>
<feature type="binding site" evidence="1">
    <location>
        <position position="213"/>
    </location>
    <ligand>
        <name>substrate</name>
    </ligand>
</feature>
<feature type="binding site" evidence="1">
    <location>
        <position position="232"/>
    </location>
    <ligand>
        <name>ATP</name>
        <dbReference type="ChEBI" id="CHEBI:30616"/>
    </ligand>
</feature>
<feature type="binding site" evidence="1">
    <location>
        <position position="232"/>
    </location>
    <ligand>
        <name>Mn(2+)</name>
        <dbReference type="ChEBI" id="CHEBI:29035"/>
    </ligand>
</feature>
<feature type="binding site" evidence="1">
    <location>
        <begin position="248"/>
        <end position="256"/>
    </location>
    <ligand>
        <name>ATP</name>
        <dbReference type="ChEBI" id="CHEBI:30616"/>
    </ligand>
</feature>
<feature type="binding site" evidence="1">
    <location>
        <position position="269"/>
    </location>
    <ligand>
        <name>Mn(2+)</name>
        <dbReference type="ChEBI" id="CHEBI:29035"/>
    </ligand>
</feature>
<feature type="binding site" evidence="1">
    <location>
        <position position="297"/>
    </location>
    <ligand>
        <name>ATP</name>
        <dbReference type="ChEBI" id="CHEBI:30616"/>
    </ligand>
</feature>
<feature type="binding site" evidence="1">
    <location>
        <position position="333"/>
    </location>
    <ligand>
        <name>ATP</name>
        <dbReference type="ChEBI" id="CHEBI:30616"/>
    </ligand>
</feature>
<feature type="binding site" evidence="1">
    <location>
        <position position="333"/>
    </location>
    <ligand>
        <name>substrate</name>
    </ligand>
</feature>
<feature type="binding site" evidence="1">
    <location>
        <begin position="449"/>
        <end position="450"/>
    </location>
    <ligand>
        <name>ATP</name>
        <dbReference type="ChEBI" id="CHEBI:30616"/>
    </ligand>
</feature>
<feature type="binding site" evidence="1">
    <location>
        <position position="455"/>
    </location>
    <ligand>
        <name>ATP</name>
        <dbReference type="ChEBI" id="CHEBI:30616"/>
    </ligand>
</feature>
<feature type="modified residue" description="N6-acetyllysine" evidence="1">
    <location>
        <position position="87"/>
    </location>
</feature>
<feature type="modified residue" description="N6-acetyllysine" evidence="1">
    <location>
        <position position="523"/>
    </location>
</feature>
<evidence type="ECO:0000255" key="1">
    <source>
        <dbReference type="HAMAP-Rule" id="MF_00453"/>
    </source>
</evidence>
<accession>B7UKA7</accession>
<proteinExistence type="inferred from homology"/>
<reference key="1">
    <citation type="journal article" date="2009" name="J. Bacteriol.">
        <title>Complete genome sequence and comparative genome analysis of enteropathogenic Escherichia coli O127:H6 strain E2348/69.</title>
        <authorList>
            <person name="Iguchi A."/>
            <person name="Thomson N.R."/>
            <person name="Ogura Y."/>
            <person name="Saunders D."/>
            <person name="Ooka T."/>
            <person name="Henderson I.R."/>
            <person name="Harris D."/>
            <person name="Asadulghani M."/>
            <person name="Kurokawa K."/>
            <person name="Dean P."/>
            <person name="Kenny B."/>
            <person name="Quail M.A."/>
            <person name="Thurston S."/>
            <person name="Dougan G."/>
            <person name="Hayashi T."/>
            <person name="Parkhill J."/>
            <person name="Frankel G."/>
        </authorList>
    </citation>
    <scope>NUCLEOTIDE SEQUENCE [LARGE SCALE GENOMIC DNA]</scope>
    <source>
        <strain>E2348/69 / EPEC</strain>
    </source>
</reference>